<sequence length="1019" mass="115220">MAVKCFSLYLILAAIVIGGVTSEYIEYNTKPRIVPEKINVHLVPHSHDDVGWLKTVDQYYVGSNNSIRGACVQNVLDSVIASLLDDENRKFIYVEMAFFQRWWRQQSNAKKVKVKKLVDSGQLEFINGGMCMHDEATPHYIDMIDQTTLGHQFIKTEFGQVPRVGWQIDPFGHSAVQAYLLGAEFGFDSLFFARIDYQDRAKRLREKTLEVIWQGSKSLGSSSQIFTGVFPRHYDPPEGFTFEINDVSAPIQDDPLLFDYNVQERVNDFVAAALAQVNVTRTNHIMWLMGTDFRYQYAYSWFRQIDKFIHYVNKDGRLNVLYSTPSIYTDAKYAANESWPLKTDDFFPYADKPNAYWTGYFTSRPAFKKYVRDLSGYYLAARQLEFLRGRDSSGPTTDMLADALAIAQHHDAVSGTQRQHVAADYALRLSMGYLQAEKLVASSLSFLSAAKSSTEKKNPGTKFQQCPLLNISYCPASEARLLSGKSLVVVVYNSLGWKREEVVRVPVSSENVIVKDASGKEVVFQLLPLSEIALRIRNEYVKAYLGRSPRDTAKHVLAFTASVPPLGFSSYVISDTGRTARGLSASYVTSGSMNQNVEVGQGNLKLRYSEEGVKITRHLSTKNQVTAEQSYAYYIGSNGTDKDPQASGAYVFRPDGVLPIKSKEEAQLTIVQGPLFDEVHQELNSWISQITRVYKGKNHAEIEFTIGPIPADDGISKEIITKLTTTMKTNGTFYTDSNGRDFIKRIRDFRTDWDLQVYQPVAGNYYPLNLGIYMQDKTSELSVLVDRAVGGSSLENGQIELMLHRRMQHDDIRGVGEILNETVCLPEGCKGLTIQGKFYVQIDKPGDGAKWRRTFGQEIYSPLLIAFTEQEGDSWINSHKTTFSAFEPSYSLPKNVALLTLQELENGEVLLRLAHLFEVGEDSEYSVMAKVELKKLFHNKKIREVKETSLSGNQEKAEMEKRRLIWKVEGSAGEEVKRGEAVDAEKLVVELVPMEIRTLLIKFDDQIEMVGDKEQQHRL</sequence>
<organism>
    <name type="scientific">Arabidopsis thaliana</name>
    <name type="common">Mouse-ear cress</name>
    <dbReference type="NCBI Taxonomy" id="3702"/>
    <lineage>
        <taxon>Eukaryota</taxon>
        <taxon>Viridiplantae</taxon>
        <taxon>Streptophyta</taxon>
        <taxon>Embryophyta</taxon>
        <taxon>Tracheophyta</taxon>
        <taxon>Spermatophyta</taxon>
        <taxon>Magnoliopsida</taxon>
        <taxon>eudicotyledons</taxon>
        <taxon>Gunneridae</taxon>
        <taxon>Pentapetalae</taxon>
        <taxon>rosids</taxon>
        <taxon>malvids</taxon>
        <taxon>Brassicales</taxon>
        <taxon>Brassicaceae</taxon>
        <taxon>Camelineae</taxon>
        <taxon>Arabidopsis</taxon>
    </lineage>
</organism>
<evidence type="ECO:0000250" key="1">
    <source>
        <dbReference type="UniProtKB" id="C0HJB3"/>
    </source>
</evidence>
<evidence type="ECO:0000250" key="2">
    <source>
        <dbReference type="UniProtKB" id="Q29451"/>
    </source>
</evidence>
<evidence type="ECO:0000255" key="3"/>
<evidence type="ECO:0000255" key="4">
    <source>
        <dbReference type="PROSITE-ProRule" id="PRU00498"/>
    </source>
</evidence>
<evidence type="ECO:0000269" key="5">
    <source>
    </source>
</evidence>
<evidence type="ECO:0000305" key="6"/>
<evidence type="ECO:0000312" key="7">
    <source>
        <dbReference type="Araport" id="AT3G26720"/>
    </source>
</evidence>
<evidence type="ECO:0000312" key="8">
    <source>
        <dbReference type="EMBL" id="BAB01735.1"/>
    </source>
</evidence>
<proteinExistence type="evidence at protein level"/>
<name>MANA1_ARATH</name>
<keyword id="KW-0025">Alternative splicing</keyword>
<keyword id="KW-1015">Disulfide bond</keyword>
<keyword id="KW-0325">Glycoprotein</keyword>
<keyword id="KW-0326">Glycosidase</keyword>
<keyword id="KW-0378">Hydrolase</keyword>
<keyword id="KW-0479">Metal-binding</keyword>
<keyword id="KW-1185">Reference proteome</keyword>
<keyword id="KW-0732">Signal</keyword>
<keyword id="KW-0862">Zinc</keyword>
<protein>
    <recommendedName>
        <fullName evidence="6">Alpha-mannosidase At3g26720</fullName>
        <ecNumber evidence="5">3.2.1.24</ecNumber>
    </recommendedName>
</protein>
<comment type="function">
    <text evidence="5">Liberates mannose from p-nitrophenyl-alpha-D-mannoside in vitro.</text>
</comment>
<comment type="catalytic activity">
    <reaction evidence="5">
        <text>Hydrolysis of terminal, non-reducing alpha-D-mannose residues in alpha-D-mannosides.</text>
        <dbReference type="EC" id="3.2.1.24"/>
    </reaction>
</comment>
<comment type="cofactor">
    <cofactor evidence="2">
        <name>Zn(2+)</name>
        <dbReference type="ChEBI" id="CHEBI:29105"/>
    </cofactor>
    <text evidence="2">Binds 1 zinc ion per subunit.</text>
</comment>
<comment type="subunit">
    <text evidence="2">Homodimer.</text>
</comment>
<comment type="alternative products">
    <event type="alternative splicing"/>
    <isoform>
        <id>P94078-1</id>
        <name>1</name>
        <sequence type="displayed"/>
    </isoform>
    <text evidence="6">A number of isoforms are produced. According to EST sequences.</text>
</comment>
<comment type="similarity">
    <text evidence="6">Belongs to the glycosyl hydrolase 38 family.</text>
</comment>
<gene>
    <name evidence="7" type="ordered locus">At3g26720</name>
    <name evidence="8" type="ORF">MLJ15.11</name>
</gene>
<accession>P94078</accession>
<accession>Q96239</accession>
<dbReference type="EC" id="3.2.1.24" evidence="5"/>
<dbReference type="EMBL" id="X98130">
    <property type="protein sequence ID" value="CAA66821.1"/>
    <property type="molecule type" value="Genomic_DNA"/>
</dbReference>
<dbReference type="EMBL" id="Y11767">
    <property type="protein sequence ID" value="CAA72432.1"/>
    <property type="molecule type" value="mRNA"/>
</dbReference>
<dbReference type="EMBL" id="AB026648">
    <property type="protein sequence ID" value="BAB01735.1"/>
    <property type="molecule type" value="Genomic_DNA"/>
</dbReference>
<dbReference type="EMBL" id="CP002686">
    <property type="protein sequence ID" value="AEE77203.1"/>
    <property type="molecule type" value="Genomic_DNA"/>
</dbReference>
<dbReference type="EMBL" id="AY039536">
    <property type="protein sequence ID" value="AAK62592.1"/>
    <property type="molecule type" value="mRNA"/>
</dbReference>
<dbReference type="EMBL" id="AY113006">
    <property type="protein sequence ID" value="AAM47314.1"/>
    <property type="molecule type" value="mRNA"/>
</dbReference>
<dbReference type="RefSeq" id="NP_189306.1">
    <molecule id="P94078-1"/>
    <property type="nucleotide sequence ID" value="NM_113583.4"/>
</dbReference>
<dbReference type="SMR" id="P94078"/>
<dbReference type="FunCoup" id="P94078">
    <property type="interactions" value="1026"/>
</dbReference>
<dbReference type="STRING" id="3702.P94078"/>
<dbReference type="CAZy" id="GH38">
    <property type="family name" value="Glycoside Hydrolase Family 38"/>
</dbReference>
<dbReference type="GlyGen" id="P94078">
    <property type="glycosylation" value="7 sites"/>
</dbReference>
<dbReference type="PaxDb" id="3702-AT3G26720.1"/>
<dbReference type="ProteomicsDB" id="238582">
    <molecule id="P94078-1"/>
</dbReference>
<dbReference type="EnsemblPlants" id="AT3G26720.1">
    <molecule id="P94078-1"/>
    <property type="protein sequence ID" value="AT3G26720.1"/>
    <property type="gene ID" value="AT3G26720"/>
</dbReference>
<dbReference type="GeneID" id="822284"/>
<dbReference type="Gramene" id="AT3G26720.1">
    <molecule id="P94078-1"/>
    <property type="protein sequence ID" value="AT3G26720.1"/>
    <property type="gene ID" value="AT3G26720"/>
</dbReference>
<dbReference type="KEGG" id="ath:AT3G26720"/>
<dbReference type="Araport" id="AT3G26720"/>
<dbReference type="TAIR" id="AT3G26720"/>
<dbReference type="eggNOG" id="KOG1959">
    <property type="taxonomic scope" value="Eukaryota"/>
</dbReference>
<dbReference type="InParanoid" id="P94078"/>
<dbReference type="OMA" id="QVMGIMQ"/>
<dbReference type="OrthoDB" id="2016903at2759"/>
<dbReference type="PhylomeDB" id="P94078"/>
<dbReference type="BioCyc" id="ARA:AT3G26720-MONOMER"/>
<dbReference type="PRO" id="PR:P94078"/>
<dbReference type="Proteomes" id="UP000006548">
    <property type="component" value="Chromosome 3"/>
</dbReference>
<dbReference type="ExpressionAtlas" id="P94078">
    <property type="expression patterns" value="baseline and differential"/>
</dbReference>
<dbReference type="GO" id="GO:0000325">
    <property type="term" value="C:plant-type vacuole"/>
    <property type="evidence" value="ECO:0007005"/>
    <property type="project" value="TAIR"/>
</dbReference>
<dbReference type="GO" id="GO:0099503">
    <property type="term" value="C:secretory vesicle"/>
    <property type="evidence" value="ECO:0007005"/>
    <property type="project" value="TAIR"/>
</dbReference>
<dbReference type="GO" id="GO:0005773">
    <property type="term" value="C:vacuole"/>
    <property type="evidence" value="ECO:0007005"/>
    <property type="project" value="TAIR"/>
</dbReference>
<dbReference type="GO" id="GO:0004559">
    <property type="term" value="F:alpha-mannosidase activity"/>
    <property type="evidence" value="ECO:0000314"/>
    <property type="project" value="UniProtKB"/>
</dbReference>
<dbReference type="GO" id="GO:0030246">
    <property type="term" value="F:carbohydrate binding"/>
    <property type="evidence" value="ECO:0007669"/>
    <property type="project" value="InterPro"/>
</dbReference>
<dbReference type="GO" id="GO:0046872">
    <property type="term" value="F:metal ion binding"/>
    <property type="evidence" value="ECO:0007669"/>
    <property type="project" value="UniProtKB-KW"/>
</dbReference>
<dbReference type="GO" id="GO:0006013">
    <property type="term" value="P:mannose metabolic process"/>
    <property type="evidence" value="ECO:0007669"/>
    <property type="project" value="InterPro"/>
</dbReference>
<dbReference type="CDD" id="cd10810">
    <property type="entry name" value="GH38N_AMII_LAM_like"/>
    <property type="match status" value="1"/>
</dbReference>
<dbReference type="FunFam" id="1.20.1270.50:FF:000002">
    <property type="entry name" value="Alpha-mannosidase"/>
    <property type="match status" value="1"/>
</dbReference>
<dbReference type="FunFam" id="1.20.1270.50:FF:000003">
    <property type="entry name" value="Alpha-mannosidase"/>
    <property type="match status" value="1"/>
</dbReference>
<dbReference type="FunFam" id="2.60.40.1180:FF:000015">
    <property type="entry name" value="Alpha-mannosidase"/>
    <property type="match status" value="1"/>
</dbReference>
<dbReference type="FunFam" id="2.60.40.1360:FF:000001">
    <property type="entry name" value="Alpha-mannosidase"/>
    <property type="match status" value="1"/>
</dbReference>
<dbReference type="FunFam" id="2.70.98.30:FF:000004">
    <property type="entry name" value="Alpha-mannosidase"/>
    <property type="match status" value="1"/>
</dbReference>
<dbReference type="FunFam" id="3.20.110.10:FF:000001">
    <property type="entry name" value="Alpha-mannosidase"/>
    <property type="match status" value="1"/>
</dbReference>
<dbReference type="Gene3D" id="2.60.40.1360">
    <property type="match status" value="1"/>
</dbReference>
<dbReference type="Gene3D" id="3.20.110.10">
    <property type="entry name" value="Glycoside hydrolase 38, N terminal domain"/>
    <property type="match status" value="1"/>
</dbReference>
<dbReference type="Gene3D" id="1.20.1270.50">
    <property type="entry name" value="Glycoside hydrolase family 38, central domain"/>
    <property type="match status" value="2"/>
</dbReference>
<dbReference type="Gene3D" id="2.60.40.1180">
    <property type="entry name" value="Golgi alpha-mannosidase II"/>
    <property type="match status" value="1"/>
</dbReference>
<dbReference type="Gene3D" id="2.70.98.30">
    <property type="entry name" value="Golgi alpha-mannosidase II, domain 4"/>
    <property type="match status" value="1"/>
</dbReference>
<dbReference type="InterPro" id="IPR011013">
    <property type="entry name" value="Gal_mutarotase_sf_dom"/>
</dbReference>
<dbReference type="InterPro" id="IPR041147">
    <property type="entry name" value="GH38_C"/>
</dbReference>
<dbReference type="InterPro" id="IPR011330">
    <property type="entry name" value="Glyco_hydro/deAcase_b/a-brl"/>
</dbReference>
<dbReference type="InterPro" id="IPR011682">
    <property type="entry name" value="Glyco_hydro_38_C"/>
</dbReference>
<dbReference type="InterPro" id="IPR015341">
    <property type="entry name" value="Glyco_hydro_38_cen"/>
</dbReference>
<dbReference type="InterPro" id="IPR037094">
    <property type="entry name" value="Glyco_hydro_38_cen_sf"/>
</dbReference>
<dbReference type="InterPro" id="IPR000602">
    <property type="entry name" value="Glyco_hydro_38_N"/>
</dbReference>
<dbReference type="InterPro" id="IPR027291">
    <property type="entry name" value="Glyco_hydro_38_N_sf"/>
</dbReference>
<dbReference type="InterPro" id="IPR028995">
    <property type="entry name" value="Glyco_hydro_57/38_cen_sf"/>
</dbReference>
<dbReference type="InterPro" id="IPR013780">
    <property type="entry name" value="Glyco_hydro_b"/>
</dbReference>
<dbReference type="InterPro" id="IPR050843">
    <property type="entry name" value="Glycosyl_Hydrlase_38"/>
</dbReference>
<dbReference type="InterPro" id="IPR048534">
    <property type="entry name" value="Man2a1-like_dom"/>
</dbReference>
<dbReference type="PANTHER" id="PTHR11607">
    <property type="entry name" value="ALPHA-MANNOSIDASE"/>
    <property type="match status" value="1"/>
</dbReference>
<dbReference type="PANTHER" id="PTHR11607:SF60">
    <property type="entry name" value="ALPHA-MANNOSIDASE"/>
    <property type="match status" value="1"/>
</dbReference>
<dbReference type="Pfam" id="PF09261">
    <property type="entry name" value="Alpha-mann_mid"/>
    <property type="match status" value="1"/>
</dbReference>
<dbReference type="Pfam" id="PF17677">
    <property type="entry name" value="Glyco_hydro38C2"/>
    <property type="match status" value="1"/>
</dbReference>
<dbReference type="Pfam" id="PF07748">
    <property type="entry name" value="Glyco_hydro_38C"/>
    <property type="match status" value="1"/>
</dbReference>
<dbReference type="Pfam" id="PF01074">
    <property type="entry name" value="Glyco_hydro_38N"/>
    <property type="match status" value="1"/>
</dbReference>
<dbReference type="Pfam" id="PF21260">
    <property type="entry name" value="Laman-like_dom"/>
    <property type="match status" value="1"/>
</dbReference>
<dbReference type="SMART" id="SM00872">
    <property type="entry name" value="Alpha-mann_mid"/>
    <property type="match status" value="1"/>
</dbReference>
<dbReference type="SUPFAM" id="SSF88688">
    <property type="entry name" value="Families 57/38 glycoside transferase middle domain"/>
    <property type="match status" value="1"/>
</dbReference>
<dbReference type="SUPFAM" id="SSF74650">
    <property type="entry name" value="Galactose mutarotase-like"/>
    <property type="match status" value="1"/>
</dbReference>
<dbReference type="SUPFAM" id="SSF88713">
    <property type="entry name" value="Glycoside hydrolase/deacetylase"/>
    <property type="match status" value="1"/>
</dbReference>
<reference key="1">
    <citation type="journal article" date="1996" name="Nucleic Acids Res.">
        <title>Sequence analysis of an 81 kb contig from Arabidopsis thaliana chromosome III.</title>
        <authorList>
            <person name="Quigley F."/>
            <person name="Dao P."/>
            <person name="Cottet A."/>
            <person name="Mache R."/>
        </authorList>
    </citation>
    <scope>NUCLEOTIDE SEQUENCE [GENOMIC DNA / MRNA]</scope>
</reference>
<reference key="2">
    <citation type="journal article" date="2000" name="DNA Res.">
        <title>Structural analysis of Arabidopsis thaliana chromosome 3. I. Sequence features of the regions of 4,504,864 bp covered by sixty P1 and TAC clones.</title>
        <authorList>
            <person name="Sato S."/>
            <person name="Nakamura Y."/>
            <person name="Kaneko T."/>
            <person name="Katoh T."/>
            <person name="Asamizu E."/>
            <person name="Tabata S."/>
        </authorList>
    </citation>
    <scope>NUCLEOTIDE SEQUENCE [LARGE SCALE GENOMIC DNA]</scope>
    <source>
        <strain>cv. Columbia</strain>
    </source>
</reference>
<reference key="3">
    <citation type="journal article" date="2017" name="Plant J.">
        <title>Araport11: a complete reannotation of the Arabidopsis thaliana reference genome.</title>
        <authorList>
            <person name="Cheng C.Y."/>
            <person name="Krishnakumar V."/>
            <person name="Chan A.P."/>
            <person name="Thibaud-Nissen F."/>
            <person name="Schobel S."/>
            <person name="Town C.D."/>
        </authorList>
    </citation>
    <scope>GENOME REANNOTATION</scope>
    <source>
        <strain>cv. Columbia</strain>
    </source>
</reference>
<reference key="4">
    <citation type="journal article" date="2003" name="Science">
        <title>Empirical analysis of transcriptional activity in the Arabidopsis genome.</title>
        <authorList>
            <person name="Yamada K."/>
            <person name="Lim J."/>
            <person name="Dale J.M."/>
            <person name="Chen H."/>
            <person name="Shinn P."/>
            <person name="Palm C.J."/>
            <person name="Southwick A.M."/>
            <person name="Wu H.C."/>
            <person name="Kim C.J."/>
            <person name="Nguyen M."/>
            <person name="Pham P.K."/>
            <person name="Cheuk R.F."/>
            <person name="Karlin-Newmann G."/>
            <person name="Liu S.X."/>
            <person name="Lam B."/>
            <person name="Sakano H."/>
            <person name="Wu T."/>
            <person name="Yu G."/>
            <person name="Miranda M."/>
            <person name="Quach H.L."/>
            <person name="Tripp M."/>
            <person name="Chang C.H."/>
            <person name="Lee J.M."/>
            <person name="Toriumi M.J."/>
            <person name="Chan M.M."/>
            <person name="Tang C.C."/>
            <person name="Onodera C.S."/>
            <person name="Deng J.M."/>
            <person name="Akiyama K."/>
            <person name="Ansari Y."/>
            <person name="Arakawa T."/>
            <person name="Banh J."/>
            <person name="Banno F."/>
            <person name="Bowser L."/>
            <person name="Brooks S.Y."/>
            <person name="Carninci P."/>
            <person name="Chao Q."/>
            <person name="Choy N."/>
            <person name="Enju A."/>
            <person name="Goldsmith A.D."/>
            <person name="Gurjal M."/>
            <person name="Hansen N.F."/>
            <person name="Hayashizaki Y."/>
            <person name="Johnson-Hopson C."/>
            <person name="Hsuan V.W."/>
            <person name="Iida K."/>
            <person name="Karnes M."/>
            <person name="Khan S."/>
            <person name="Koesema E."/>
            <person name="Ishida J."/>
            <person name="Jiang P.X."/>
            <person name="Jones T."/>
            <person name="Kawai J."/>
            <person name="Kamiya A."/>
            <person name="Meyers C."/>
            <person name="Nakajima M."/>
            <person name="Narusaka M."/>
            <person name="Seki M."/>
            <person name="Sakurai T."/>
            <person name="Satou M."/>
            <person name="Tamse R."/>
            <person name="Vaysberg M."/>
            <person name="Wallender E.K."/>
            <person name="Wong C."/>
            <person name="Yamamura Y."/>
            <person name="Yuan S."/>
            <person name="Shinozaki K."/>
            <person name="Davis R.W."/>
            <person name="Theologis A."/>
            <person name="Ecker J.R."/>
        </authorList>
    </citation>
    <scope>NUCLEOTIDE SEQUENCE [LARGE SCALE MRNA]</scope>
    <source>
        <strain>cv. Columbia</strain>
    </source>
</reference>
<reference key="5">
    <citation type="journal article" date="2001" name="J. Biosci. Bioeng.">
        <title>Identification of putative gene encoded on ORF16 of the 81 kb contig of Arabidopsis thaliana chromosome III as alpha-mannosidase.</title>
        <authorList>
            <person name="Fujiyama K."/>
            <person name="Kira Y."/>
            <person name="Iizuka M."/>
            <person name="Kimura Y."/>
            <person name="Seki T."/>
        </authorList>
    </citation>
    <scope>FUNCTION</scope>
    <scope>CATALYTIC ACTIVITY</scope>
</reference>
<feature type="signal peptide" evidence="3">
    <location>
        <begin position="1"/>
        <end position="22"/>
    </location>
</feature>
<feature type="chain" id="PRO_5006739397" description="Alpha-mannosidase At3g26720" evidence="3">
    <location>
        <begin position="23"/>
        <end position="1019"/>
    </location>
</feature>
<feature type="binding site" evidence="2">
    <location>
        <position position="47"/>
    </location>
    <ligand>
        <name>Zn(2+)</name>
        <dbReference type="ChEBI" id="CHEBI:29105"/>
    </ligand>
</feature>
<feature type="binding site" evidence="2">
    <location>
        <position position="49"/>
    </location>
    <ligand>
        <name>Zn(2+)</name>
        <dbReference type="ChEBI" id="CHEBI:29105"/>
    </ligand>
</feature>
<feature type="binding site" evidence="2">
    <location>
        <position position="169"/>
    </location>
    <ligand>
        <name>Zn(2+)</name>
        <dbReference type="ChEBI" id="CHEBI:29105"/>
    </ligand>
</feature>
<feature type="binding site" evidence="2">
    <location>
        <position position="410"/>
    </location>
    <ligand>
        <name>Zn(2+)</name>
        <dbReference type="ChEBI" id="CHEBI:29105"/>
    </ligand>
</feature>
<feature type="glycosylation site" description="N-linked (GlcNAc...) asparagine" evidence="4">
    <location>
        <position position="64"/>
    </location>
</feature>
<feature type="glycosylation site" description="N-linked (GlcNAc...) asparagine" evidence="4">
    <location>
        <position position="278"/>
    </location>
</feature>
<feature type="glycosylation site" description="N-linked (GlcNAc...) asparagine" evidence="4">
    <location>
        <position position="336"/>
    </location>
</feature>
<feature type="glycosylation site" description="N-linked (GlcNAc...) asparagine" evidence="4">
    <location>
        <position position="470"/>
    </location>
</feature>
<feature type="glycosylation site" description="N-linked (GlcNAc...) asparagine" evidence="4">
    <location>
        <position position="638"/>
    </location>
</feature>
<feature type="glycosylation site" description="N-linked (GlcNAc...) asparagine" evidence="4">
    <location>
        <position position="730"/>
    </location>
</feature>
<feature type="glycosylation site" description="N-linked (GlcNAc...) asparagine" evidence="4">
    <location>
        <position position="820"/>
    </location>
</feature>
<feature type="disulfide bond" evidence="1">
    <location>
        <begin position="466"/>
        <end position="474"/>
    </location>
</feature>
<feature type="disulfide bond" evidence="1">
    <location>
        <begin position="824"/>
        <end position="829"/>
    </location>
</feature>